<reference key="1">
    <citation type="journal article" date="2007" name="Genome Biol.">
        <title>Comparison of Francisella tularensis genomes reveals evolutionary events associated with the emergence of human pathogenic strains.</title>
        <authorList>
            <person name="Rohmer L."/>
            <person name="Fong C."/>
            <person name="Abmayr S."/>
            <person name="Wasnick M."/>
            <person name="Larson Freeman T.J."/>
            <person name="Radey M."/>
            <person name="Guina T."/>
            <person name="Svensson K."/>
            <person name="Hayden H.S."/>
            <person name="Jacobs M."/>
            <person name="Gallagher L.A."/>
            <person name="Manoil C."/>
            <person name="Ernst R.K."/>
            <person name="Drees B."/>
            <person name="Buckley D."/>
            <person name="Haugen E."/>
            <person name="Bovee D."/>
            <person name="Zhou Y."/>
            <person name="Chang J."/>
            <person name="Levy R."/>
            <person name="Lim R."/>
            <person name="Gillett W."/>
            <person name="Guenthener D."/>
            <person name="Kang A."/>
            <person name="Shaffer S.A."/>
            <person name="Taylor G."/>
            <person name="Chen J."/>
            <person name="Gallis B."/>
            <person name="D'Argenio D.A."/>
            <person name="Forsman M."/>
            <person name="Olson M.V."/>
            <person name="Goodlett D.R."/>
            <person name="Kaul R."/>
            <person name="Miller S.I."/>
            <person name="Brittnacher M.J."/>
        </authorList>
    </citation>
    <scope>NUCLEOTIDE SEQUENCE [LARGE SCALE GENOMIC DNA]</scope>
    <source>
        <strain>U112</strain>
    </source>
</reference>
<keyword id="KW-0067">ATP-binding</keyword>
<keyword id="KW-0436">Ligase</keyword>
<keyword id="KW-0460">Magnesium</keyword>
<keyword id="KW-0479">Metal-binding</keyword>
<keyword id="KW-0547">Nucleotide-binding</keyword>
<keyword id="KW-0816">Tricarboxylic acid cycle</keyword>
<gene>
    <name evidence="1" type="primary">sucC</name>
    <name type="ordered locus">FTN_0594</name>
</gene>
<evidence type="ECO:0000255" key="1">
    <source>
        <dbReference type="HAMAP-Rule" id="MF_00558"/>
    </source>
</evidence>
<protein>
    <recommendedName>
        <fullName evidence="1">Succinate--CoA ligase [ADP-forming] subunit beta</fullName>
        <ecNumber evidence="1">6.2.1.5</ecNumber>
    </recommendedName>
    <alternativeName>
        <fullName evidence="1">Succinyl-CoA synthetase subunit beta</fullName>
        <shortName evidence="1">SCS-beta</shortName>
    </alternativeName>
</protein>
<feature type="chain" id="PRO_1000082091" description="Succinate--CoA ligase [ADP-forming] subunit beta">
    <location>
        <begin position="1"/>
        <end position="387"/>
    </location>
</feature>
<feature type="domain" description="ATP-grasp" evidence="1">
    <location>
        <begin position="9"/>
        <end position="245"/>
    </location>
</feature>
<feature type="binding site" evidence="1">
    <location>
        <position position="46"/>
    </location>
    <ligand>
        <name>ATP</name>
        <dbReference type="ChEBI" id="CHEBI:30616"/>
    </ligand>
</feature>
<feature type="binding site" evidence="1">
    <location>
        <begin position="53"/>
        <end position="55"/>
    </location>
    <ligand>
        <name>ATP</name>
        <dbReference type="ChEBI" id="CHEBI:30616"/>
    </ligand>
</feature>
<feature type="binding site" evidence="1">
    <location>
        <position position="100"/>
    </location>
    <ligand>
        <name>ATP</name>
        <dbReference type="ChEBI" id="CHEBI:30616"/>
    </ligand>
</feature>
<feature type="binding site" evidence="1">
    <location>
        <position position="103"/>
    </location>
    <ligand>
        <name>ATP</name>
        <dbReference type="ChEBI" id="CHEBI:30616"/>
    </ligand>
</feature>
<feature type="binding site" evidence="1">
    <location>
        <position position="108"/>
    </location>
    <ligand>
        <name>ATP</name>
        <dbReference type="ChEBI" id="CHEBI:30616"/>
    </ligand>
</feature>
<feature type="binding site" evidence="1">
    <location>
        <position position="200"/>
    </location>
    <ligand>
        <name>Mg(2+)</name>
        <dbReference type="ChEBI" id="CHEBI:18420"/>
    </ligand>
</feature>
<feature type="binding site" evidence="1">
    <location>
        <position position="214"/>
    </location>
    <ligand>
        <name>Mg(2+)</name>
        <dbReference type="ChEBI" id="CHEBI:18420"/>
    </ligand>
</feature>
<feature type="binding site" evidence="1">
    <location>
        <position position="265"/>
    </location>
    <ligand>
        <name>substrate</name>
        <note>ligand shared with subunit alpha</note>
    </ligand>
</feature>
<feature type="binding site" evidence="1">
    <location>
        <begin position="322"/>
        <end position="324"/>
    </location>
    <ligand>
        <name>substrate</name>
        <note>ligand shared with subunit alpha</note>
    </ligand>
</feature>
<accession>A0Q5H4</accession>
<sequence length="387" mass="41528">MNLHEYQAKDLLESYGLKVQKGIVAHNPNEAAQAFDQLGGKFAVVKAQVHAGGRGKAGGVKVVKSSQEAREVAESLIGKNLVTFQTDAEGQPVNSVGVFEDVYPVTRELYLGAVVDRSSRKVTFMASTEGGVDIEEVAHNSPEKILKVEVDPLVGLQPFQAREVAFKLGLEGKQINDFVKTMLGAYKAFIECDFALFEINPLAVRENGEIVCVDGKINLDSNALYRHPKLLALRDKSQENAKELKASEHELNYVALEGNIGCMVNGAGLAMATMDIIQLYGGKPANFLDVGGGATKERVIEAFKLILDDENVKAVLINIFGGIVRCDMIAEAIIEAVKEVNVTVPVVVRLEGNNAEKGAKILADSGLKLIPADGLADAADKVVKSLG</sequence>
<organism>
    <name type="scientific">Francisella tularensis subsp. novicida (strain U112)</name>
    <dbReference type="NCBI Taxonomy" id="401614"/>
    <lineage>
        <taxon>Bacteria</taxon>
        <taxon>Pseudomonadati</taxon>
        <taxon>Pseudomonadota</taxon>
        <taxon>Gammaproteobacteria</taxon>
        <taxon>Thiotrichales</taxon>
        <taxon>Francisellaceae</taxon>
        <taxon>Francisella</taxon>
    </lineage>
</organism>
<proteinExistence type="inferred from homology"/>
<comment type="function">
    <text evidence="1">Succinyl-CoA synthetase functions in the citric acid cycle (TCA), coupling the hydrolysis of succinyl-CoA to the synthesis of either ATP or GTP and thus represents the only step of substrate-level phosphorylation in the TCA. The beta subunit provides nucleotide specificity of the enzyme and binds the substrate succinate, while the binding sites for coenzyme A and phosphate are found in the alpha subunit.</text>
</comment>
<comment type="catalytic activity">
    <reaction evidence="1">
        <text>succinate + ATP + CoA = succinyl-CoA + ADP + phosphate</text>
        <dbReference type="Rhea" id="RHEA:17661"/>
        <dbReference type="ChEBI" id="CHEBI:30031"/>
        <dbReference type="ChEBI" id="CHEBI:30616"/>
        <dbReference type="ChEBI" id="CHEBI:43474"/>
        <dbReference type="ChEBI" id="CHEBI:57287"/>
        <dbReference type="ChEBI" id="CHEBI:57292"/>
        <dbReference type="ChEBI" id="CHEBI:456216"/>
        <dbReference type="EC" id="6.2.1.5"/>
    </reaction>
    <physiologicalReaction direction="right-to-left" evidence="1">
        <dbReference type="Rhea" id="RHEA:17663"/>
    </physiologicalReaction>
</comment>
<comment type="catalytic activity">
    <reaction evidence="1">
        <text>GTP + succinate + CoA = succinyl-CoA + GDP + phosphate</text>
        <dbReference type="Rhea" id="RHEA:22120"/>
        <dbReference type="ChEBI" id="CHEBI:30031"/>
        <dbReference type="ChEBI" id="CHEBI:37565"/>
        <dbReference type="ChEBI" id="CHEBI:43474"/>
        <dbReference type="ChEBI" id="CHEBI:57287"/>
        <dbReference type="ChEBI" id="CHEBI:57292"/>
        <dbReference type="ChEBI" id="CHEBI:58189"/>
    </reaction>
    <physiologicalReaction direction="right-to-left" evidence="1">
        <dbReference type="Rhea" id="RHEA:22122"/>
    </physiologicalReaction>
</comment>
<comment type="cofactor">
    <cofactor evidence="1">
        <name>Mg(2+)</name>
        <dbReference type="ChEBI" id="CHEBI:18420"/>
    </cofactor>
    <text evidence="1">Binds 1 Mg(2+) ion per subunit.</text>
</comment>
<comment type="pathway">
    <text evidence="1">Carbohydrate metabolism; tricarboxylic acid cycle; succinate from succinyl-CoA (ligase route): step 1/1.</text>
</comment>
<comment type="subunit">
    <text evidence="1">Heterotetramer of two alpha and two beta subunits.</text>
</comment>
<comment type="similarity">
    <text evidence="1">Belongs to the succinate/malate CoA ligase beta subunit family.</text>
</comment>
<dbReference type="EC" id="6.2.1.5" evidence="1"/>
<dbReference type="EMBL" id="CP000439">
    <property type="protein sequence ID" value="ABK89489.1"/>
    <property type="molecule type" value="Genomic_DNA"/>
</dbReference>
<dbReference type="RefSeq" id="WP_003033367.1">
    <property type="nucleotide sequence ID" value="NZ_CP009633.1"/>
</dbReference>
<dbReference type="SMR" id="A0Q5H4"/>
<dbReference type="GeneID" id="75263921"/>
<dbReference type="KEGG" id="ftn:FTN_0594"/>
<dbReference type="KEGG" id="ftx:AW25_1434"/>
<dbReference type="BioCyc" id="FTUL401614:G1G75-618-MONOMER"/>
<dbReference type="UniPathway" id="UPA00223">
    <property type="reaction ID" value="UER00999"/>
</dbReference>
<dbReference type="Proteomes" id="UP000000762">
    <property type="component" value="Chromosome"/>
</dbReference>
<dbReference type="GO" id="GO:0005829">
    <property type="term" value="C:cytosol"/>
    <property type="evidence" value="ECO:0007669"/>
    <property type="project" value="TreeGrafter"/>
</dbReference>
<dbReference type="GO" id="GO:0042709">
    <property type="term" value="C:succinate-CoA ligase complex"/>
    <property type="evidence" value="ECO:0007669"/>
    <property type="project" value="TreeGrafter"/>
</dbReference>
<dbReference type="GO" id="GO:0005524">
    <property type="term" value="F:ATP binding"/>
    <property type="evidence" value="ECO:0007669"/>
    <property type="project" value="UniProtKB-UniRule"/>
</dbReference>
<dbReference type="GO" id="GO:0000287">
    <property type="term" value="F:magnesium ion binding"/>
    <property type="evidence" value="ECO:0007669"/>
    <property type="project" value="UniProtKB-UniRule"/>
</dbReference>
<dbReference type="GO" id="GO:0004775">
    <property type="term" value="F:succinate-CoA ligase (ADP-forming) activity"/>
    <property type="evidence" value="ECO:0007669"/>
    <property type="project" value="UniProtKB-UniRule"/>
</dbReference>
<dbReference type="GO" id="GO:0004776">
    <property type="term" value="F:succinate-CoA ligase (GDP-forming) activity"/>
    <property type="evidence" value="ECO:0007669"/>
    <property type="project" value="RHEA"/>
</dbReference>
<dbReference type="GO" id="GO:0006104">
    <property type="term" value="P:succinyl-CoA metabolic process"/>
    <property type="evidence" value="ECO:0007669"/>
    <property type="project" value="TreeGrafter"/>
</dbReference>
<dbReference type="GO" id="GO:0006099">
    <property type="term" value="P:tricarboxylic acid cycle"/>
    <property type="evidence" value="ECO:0007669"/>
    <property type="project" value="UniProtKB-UniRule"/>
</dbReference>
<dbReference type="FunFam" id="3.30.1490.20:FF:000002">
    <property type="entry name" value="Succinate--CoA ligase [ADP-forming] subunit beta"/>
    <property type="match status" value="1"/>
</dbReference>
<dbReference type="FunFam" id="3.30.470.20:FF:000002">
    <property type="entry name" value="Succinate--CoA ligase [ADP-forming] subunit beta"/>
    <property type="match status" value="1"/>
</dbReference>
<dbReference type="FunFam" id="3.40.50.261:FF:000001">
    <property type="entry name" value="Succinate--CoA ligase [ADP-forming] subunit beta"/>
    <property type="match status" value="1"/>
</dbReference>
<dbReference type="Gene3D" id="3.30.1490.20">
    <property type="entry name" value="ATP-grasp fold, A domain"/>
    <property type="match status" value="1"/>
</dbReference>
<dbReference type="Gene3D" id="3.30.470.20">
    <property type="entry name" value="ATP-grasp fold, B domain"/>
    <property type="match status" value="1"/>
</dbReference>
<dbReference type="Gene3D" id="3.40.50.261">
    <property type="entry name" value="Succinyl-CoA synthetase domains"/>
    <property type="match status" value="1"/>
</dbReference>
<dbReference type="HAMAP" id="MF_00558">
    <property type="entry name" value="Succ_CoA_beta"/>
    <property type="match status" value="1"/>
</dbReference>
<dbReference type="InterPro" id="IPR011761">
    <property type="entry name" value="ATP-grasp"/>
</dbReference>
<dbReference type="InterPro" id="IPR013650">
    <property type="entry name" value="ATP-grasp_succ-CoA_synth-type"/>
</dbReference>
<dbReference type="InterPro" id="IPR013815">
    <property type="entry name" value="ATP_grasp_subdomain_1"/>
</dbReference>
<dbReference type="InterPro" id="IPR017866">
    <property type="entry name" value="Succ-CoA_synthase_bsu_CS"/>
</dbReference>
<dbReference type="InterPro" id="IPR005811">
    <property type="entry name" value="SUCC_ACL_C"/>
</dbReference>
<dbReference type="InterPro" id="IPR005809">
    <property type="entry name" value="Succ_CoA_ligase-like_bsu"/>
</dbReference>
<dbReference type="InterPro" id="IPR016102">
    <property type="entry name" value="Succinyl-CoA_synth-like"/>
</dbReference>
<dbReference type="NCBIfam" id="NF001913">
    <property type="entry name" value="PRK00696.1"/>
    <property type="match status" value="1"/>
</dbReference>
<dbReference type="NCBIfam" id="TIGR01016">
    <property type="entry name" value="sucCoAbeta"/>
    <property type="match status" value="1"/>
</dbReference>
<dbReference type="PANTHER" id="PTHR11815:SF10">
    <property type="entry name" value="SUCCINATE--COA LIGASE [GDP-FORMING] SUBUNIT BETA, MITOCHONDRIAL"/>
    <property type="match status" value="1"/>
</dbReference>
<dbReference type="PANTHER" id="PTHR11815">
    <property type="entry name" value="SUCCINYL-COA SYNTHETASE BETA CHAIN"/>
    <property type="match status" value="1"/>
</dbReference>
<dbReference type="Pfam" id="PF08442">
    <property type="entry name" value="ATP-grasp_2"/>
    <property type="match status" value="1"/>
</dbReference>
<dbReference type="Pfam" id="PF00549">
    <property type="entry name" value="Ligase_CoA"/>
    <property type="match status" value="1"/>
</dbReference>
<dbReference type="PIRSF" id="PIRSF001554">
    <property type="entry name" value="SucCS_beta"/>
    <property type="match status" value="1"/>
</dbReference>
<dbReference type="SUPFAM" id="SSF56059">
    <property type="entry name" value="Glutathione synthetase ATP-binding domain-like"/>
    <property type="match status" value="1"/>
</dbReference>
<dbReference type="SUPFAM" id="SSF52210">
    <property type="entry name" value="Succinyl-CoA synthetase domains"/>
    <property type="match status" value="1"/>
</dbReference>
<dbReference type="PROSITE" id="PS50975">
    <property type="entry name" value="ATP_GRASP"/>
    <property type="match status" value="1"/>
</dbReference>
<dbReference type="PROSITE" id="PS01217">
    <property type="entry name" value="SUCCINYL_COA_LIG_3"/>
    <property type="match status" value="1"/>
</dbReference>
<name>SUCC_FRATN</name>